<evidence type="ECO:0000250" key="1">
    <source>
        <dbReference type="UniProtKB" id="P0C1A7"/>
    </source>
</evidence>
<evidence type="ECO:0000255" key="2"/>
<evidence type="ECO:0000255" key="3">
    <source>
        <dbReference type="PROSITE-ProRule" id="PRU00498"/>
    </source>
</evidence>
<evidence type="ECO:0000256" key="4">
    <source>
        <dbReference type="SAM" id="MobiDB-lite"/>
    </source>
</evidence>
<evidence type="ECO:0000269" key="5">
    <source>
    </source>
</evidence>
<evidence type="ECO:0000303" key="6">
    <source>
    </source>
</evidence>
<evidence type="ECO:0000305" key="7"/>
<evidence type="ECO:0000305" key="8">
    <source>
    </source>
</evidence>
<evidence type="ECO:0000312" key="9">
    <source>
        <dbReference type="EMBL" id="CBF87052.1"/>
    </source>
</evidence>
<evidence type="ECO:0000312" key="10">
    <source>
        <dbReference type="Proteomes" id="UP000000560"/>
    </source>
</evidence>
<reference evidence="10" key="1">
    <citation type="journal article" date="2005" name="Nature">
        <title>Sequencing of Aspergillus nidulans and comparative analysis with A. fumigatus and A. oryzae.</title>
        <authorList>
            <person name="Galagan J.E."/>
            <person name="Calvo S.E."/>
            <person name="Cuomo C."/>
            <person name="Ma L.-J."/>
            <person name="Wortman J.R."/>
            <person name="Batzoglou S."/>
            <person name="Lee S.-I."/>
            <person name="Bastuerkmen M."/>
            <person name="Spevak C.C."/>
            <person name="Clutterbuck J."/>
            <person name="Kapitonov V."/>
            <person name="Jurka J."/>
            <person name="Scazzocchio C."/>
            <person name="Farman M.L."/>
            <person name="Butler J."/>
            <person name="Purcell S."/>
            <person name="Harris S."/>
            <person name="Braus G.H."/>
            <person name="Draht O."/>
            <person name="Busch S."/>
            <person name="D'Enfert C."/>
            <person name="Bouchier C."/>
            <person name="Goldman G.H."/>
            <person name="Bell-Pedersen D."/>
            <person name="Griffiths-Jones S."/>
            <person name="Doonan J.H."/>
            <person name="Yu J."/>
            <person name="Vienken K."/>
            <person name="Pain A."/>
            <person name="Freitag M."/>
            <person name="Selker E.U."/>
            <person name="Archer D.B."/>
            <person name="Penalva M.A."/>
            <person name="Oakley B.R."/>
            <person name="Momany M."/>
            <person name="Tanaka T."/>
            <person name="Kumagai T."/>
            <person name="Asai K."/>
            <person name="Machida M."/>
            <person name="Nierman W.C."/>
            <person name="Denning D.W."/>
            <person name="Caddick M.X."/>
            <person name="Hynes M."/>
            <person name="Paoletti M."/>
            <person name="Fischer R."/>
            <person name="Miller B.L."/>
            <person name="Dyer P.S."/>
            <person name="Sachs M.S."/>
            <person name="Osmani S.A."/>
            <person name="Birren B.W."/>
        </authorList>
    </citation>
    <scope>NUCLEOTIDE SEQUENCE [LARGE SCALE GENOMIC DNA]</scope>
    <source>
        <strain>FGSC A4 / ATCC 38163 / CBS 112.46 / NRRL 194 / M139</strain>
    </source>
</reference>
<reference evidence="10" key="2">
    <citation type="journal article" date="2009" name="Fungal Genet. Biol.">
        <title>The 2008 update of the Aspergillus nidulans genome annotation: a community effort.</title>
        <authorList>
            <person name="Wortman J.R."/>
            <person name="Gilsenan J.M."/>
            <person name="Joardar V."/>
            <person name="Deegan J."/>
            <person name="Clutterbuck J."/>
            <person name="Andersen M.R."/>
            <person name="Archer D."/>
            <person name="Bencina M."/>
            <person name="Braus G."/>
            <person name="Coutinho P."/>
            <person name="von Dohren H."/>
            <person name="Doonan J."/>
            <person name="Driessen A.J."/>
            <person name="Durek P."/>
            <person name="Espeso E."/>
            <person name="Fekete E."/>
            <person name="Flipphi M."/>
            <person name="Estrada C.G."/>
            <person name="Geysens S."/>
            <person name="Goldman G."/>
            <person name="de Groot P.W."/>
            <person name="Hansen K."/>
            <person name="Harris S.D."/>
            <person name="Heinekamp T."/>
            <person name="Helmstaedt K."/>
            <person name="Henrissat B."/>
            <person name="Hofmann G."/>
            <person name="Homan T."/>
            <person name="Horio T."/>
            <person name="Horiuchi H."/>
            <person name="James S."/>
            <person name="Jones M."/>
            <person name="Karaffa L."/>
            <person name="Karanyi Z."/>
            <person name="Kato M."/>
            <person name="Keller N."/>
            <person name="Kelly D.E."/>
            <person name="Kiel J.A."/>
            <person name="Kim J.M."/>
            <person name="van der Klei I.J."/>
            <person name="Klis F.M."/>
            <person name="Kovalchuk A."/>
            <person name="Krasevec N."/>
            <person name="Kubicek C.P."/>
            <person name="Liu B."/>
            <person name="Maccabe A."/>
            <person name="Meyer V."/>
            <person name="Mirabito P."/>
            <person name="Miskei M."/>
            <person name="Mos M."/>
            <person name="Mullins J."/>
            <person name="Nelson D.R."/>
            <person name="Nielsen J."/>
            <person name="Oakley B.R."/>
            <person name="Osmani S.A."/>
            <person name="Pakula T."/>
            <person name="Paszewski A."/>
            <person name="Paulsen I."/>
            <person name="Pilsyk S."/>
            <person name="Pocsi I."/>
            <person name="Punt P.J."/>
            <person name="Ram A.F."/>
            <person name="Ren Q."/>
            <person name="Robellet X."/>
            <person name="Robson G."/>
            <person name="Seiboth B."/>
            <person name="van Solingen P."/>
            <person name="Specht T."/>
            <person name="Sun J."/>
            <person name="Taheri-Talesh N."/>
            <person name="Takeshita N."/>
            <person name="Ussery D."/>
            <person name="vanKuyk P.A."/>
            <person name="Visser H."/>
            <person name="van de Vondervoort P.J."/>
            <person name="de Vries R.P."/>
            <person name="Walton J."/>
            <person name="Xiang X."/>
            <person name="Xiong Y."/>
            <person name="Zeng A.P."/>
            <person name="Brandt B.W."/>
            <person name="Cornell M.J."/>
            <person name="van den Hondel C.A."/>
            <person name="Visser J."/>
            <person name="Oliver S.G."/>
            <person name="Turner G."/>
        </authorList>
    </citation>
    <scope>GENOME REANNOTATION</scope>
    <source>
        <strain evidence="10">FGSC A4 / ATCC 38163 / CBS 112.46 / NRRL 194 / M139</strain>
    </source>
</reference>
<reference evidence="7" key="3">
    <citation type="journal article" date="2022" name="Appl. Biochem. Biotechnol.">
        <title>Biochemical Characterization of a Pectate Lyase AnPL9 from Aspergillus nidulans.</title>
        <authorList>
            <person name="Suzuki H."/>
            <person name="Morishima T."/>
            <person name="Handa A."/>
            <person name="Tsukagoshi H."/>
            <person name="Kato M."/>
            <person name="Shimizu M."/>
        </authorList>
    </citation>
    <scope>FUNCTION</scope>
    <scope>CATALYTIC ACTIVITY</scope>
    <scope>COFACTOR</scope>
    <scope>ACTIVITY REGULATION</scope>
    <scope>BIOPHYSICOCHEMICAL PROPERTIES</scope>
    <scope>SUBCELLULAR LOCATION</scope>
    <scope>INDUCTION</scope>
    <source>
        <strain evidence="6">A26</strain>
    </source>
</reference>
<name>PLYL_EMENI</name>
<accession>Q5BA93</accession>
<accession>C8VPM0</accession>
<keyword id="KW-0106">Calcium</keyword>
<keyword id="KW-0325">Glycoprotein</keyword>
<keyword id="KW-0456">Lyase</keyword>
<keyword id="KW-0479">Metal-binding</keyword>
<keyword id="KW-1185">Reference proteome</keyword>
<keyword id="KW-0964">Secreted</keyword>
<keyword id="KW-0732">Signal</keyword>
<proteinExistence type="evidence at protein level"/>
<sequence>MMGKSVWVFAALFPAVLAADIYVSPDGSDDAAGTIDAPLQSIQLAVDQATAGSTIYLRGGTYTPTSNIQITKSGTASAPYVLRAYEGESVIIDGEELPGTPADLDASLDNADRGILHIQDAEYWEFYDLELINGPYGVYARDASNNHYERITTRNNYETGFQLQGESSNNVVLYLDSYGNRDPRKNGESADGFACKEGSGEGNILRGARLWNNVDDGLDLWYAVNPVHPRISANTSREFKSAVTIEDTIAWGNGFNRWDFTPFEGDGNGFKLGGGDDTDIGPADHIITNCIAFSNAKDGFTDNSQPGNFVLTRNTAWDNTAVGFKFGTAVATLTGNIAASNGEAPTSLSDEQISDGNSWDGDEDWDDGSFVSVDVSLVQGERNADGTIEPSGFLLPADGEEIGATTDWSA</sequence>
<organism evidence="10">
    <name type="scientific">Emericella nidulans (strain FGSC A4 / ATCC 38163 / CBS 112.46 / NRRL 194 / M139)</name>
    <name type="common">Aspergillus nidulans</name>
    <dbReference type="NCBI Taxonomy" id="227321"/>
    <lineage>
        <taxon>Eukaryota</taxon>
        <taxon>Fungi</taxon>
        <taxon>Dikarya</taxon>
        <taxon>Ascomycota</taxon>
        <taxon>Pezizomycotina</taxon>
        <taxon>Eurotiomycetes</taxon>
        <taxon>Eurotiomycetidae</taxon>
        <taxon>Eurotiales</taxon>
        <taxon>Aspergillaceae</taxon>
        <taxon>Aspergillus</taxon>
        <taxon>Aspergillus subgen. Nidulantes</taxon>
    </lineage>
</organism>
<comment type="function">
    <text evidence="5">Presents an endo-cleaving activity on the homogalacturonan (HG) region in pectin (PubMed:35802235). Active on homogalacturonan with a degree of polymerization above 4, and does not appear to be affected by the degree of methylation of the substrate (PubMed:35802235). Does not degrade linear rhamnogalacturonan (PubMed:35802235).</text>
</comment>
<comment type="catalytic activity">
    <reaction evidence="5">
        <text>Eliminative cleavage of (1-&gt;4)-alpha-D-galacturonan to give oligosaccharides with 4-deoxy-alpha-D-galact-4-enuronosyl groups at their non-reducing ends.</text>
        <dbReference type="EC" id="4.2.2.2"/>
    </reaction>
</comment>
<comment type="cofactor">
    <cofactor evidence="8">
        <name>Ca(2+)</name>
        <dbReference type="ChEBI" id="CHEBI:29108"/>
    </cofactor>
</comment>
<comment type="activity regulation">
    <text evidence="5">Inhibited by iron ions (PubMed:35802235). Activated in presence of the surfactant polysorbate 20, while inhibited in the presence of Triton X-100 and sodium dodecyl sulfate (PubMed:35802235). Inhibited in presence of the organic solvents methanol, ethanol, propan-2-ol and acetone (PubMed:35802235).</text>
</comment>
<comment type="biophysicochemical properties">
    <kinetics>
        <text evidence="5">kcat is 280 sec(-1) for homogalacturonan (HG) (at 45 degrees Celsius and at pH 8) (PubMed:35802235). kcat is 357 sec(-1) for apple pectin (at 45 degrees Celsius and at pH 8) (PubMed:35802235). kcat is 272 sec(-1) for citrus peel pectin (at 45 degrees Celsius and at pH 8) (PubMed:35802235). kcat is 236 sec(-1) for rhamnogalacturonan type I (at 45 degrees Celsius and at pH 8) (PubMed:35802235).</text>
    </kinetics>
    <phDependence>
        <text evidence="5">Optimum pH is 8.</text>
    </phDependence>
    <temperatureDependence>
        <text evidence="5">Optimum temperature is 45 degrees Celsius.</text>
    </temperatureDependence>
</comment>
<comment type="subcellular location">
    <subcellularLocation>
        <location evidence="8">Secreted</location>
    </subcellularLocation>
</comment>
<comment type="induction">
    <text evidence="5">Induced during growth on homogalacturonan (HG).</text>
</comment>
<comment type="similarity">
    <text evidence="7">Belongs to the polysaccharide lyase 9 family.</text>
</comment>
<feature type="signal peptide" evidence="2">
    <location>
        <begin position="1"/>
        <end position="18"/>
    </location>
</feature>
<feature type="chain" id="PRO_5010168540" description="Pectate lyase PEL9" evidence="2">
    <location>
        <begin position="19"/>
        <end position="410"/>
    </location>
</feature>
<feature type="region of interest" description="Disordered" evidence="4">
    <location>
        <begin position="342"/>
        <end position="361"/>
    </location>
</feature>
<feature type="region of interest" description="Disordered" evidence="4">
    <location>
        <begin position="381"/>
        <end position="410"/>
    </location>
</feature>
<feature type="compositionally biased region" description="Polar residues" evidence="4">
    <location>
        <begin position="342"/>
        <end position="351"/>
    </location>
</feature>
<feature type="active site" description="Proton acceptor" evidence="1">
    <location>
        <position position="271"/>
    </location>
</feature>
<feature type="binding site" evidence="1">
    <location>
        <position position="191"/>
    </location>
    <ligand>
        <name>Ca(2+)</name>
        <dbReference type="ChEBI" id="CHEBI:29108"/>
    </ligand>
</feature>
<feature type="binding site" evidence="1">
    <location>
        <position position="215"/>
    </location>
    <ligand>
        <name>Ca(2+)</name>
        <dbReference type="ChEBI" id="CHEBI:29108"/>
    </ligand>
</feature>
<feature type="binding site" evidence="1">
    <location>
        <position position="216"/>
    </location>
    <ligand>
        <name>Ca(2+)</name>
        <dbReference type="ChEBI" id="CHEBI:29108"/>
    </ligand>
</feature>
<feature type="binding site" evidence="1">
    <location>
        <position position="219"/>
    </location>
    <ligand>
        <name>Ca(2+)</name>
        <dbReference type="ChEBI" id="CHEBI:29108"/>
    </ligand>
</feature>
<feature type="glycosylation site" description="N-linked (GlcNAc...) asparagine" evidence="3">
    <location>
        <position position="234"/>
    </location>
</feature>
<protein>
    <recommendedName>
        <fullName evidence="6">Pectate lyase PEL9</fullName>
        <ecNumber evidence="5">4.2.2.2</ecNumber>
    </recommendedName>
    <alternativeName>
        <fullName evidence="6">AnPL9</fullName>
    </alternativeName>
</protein>
<gene>
    <name evidence="7" type="primary">PEL9</name>
    <name evidence="6" type="synonym">PL9</name>
    <name evidence="9" type="ORF">ANIA_02537</name>
</gene>
<dbReference type="EC" id="4.2.2.2" evidence="5"/>
<dbReference type="EMBL" id="BN001307">
    <property type="protein sequence ID" value="CBF87052.1"/>
    <property type="molecule type" value="Genomic_DNA"/>
</dbReference>
<dbReference type="RefSeq" id="XP_660141.1">
    <property type="nucleotide sequence ID" value="XM_655049.1"/>
</dbReference>
<dbReference type="SMR" id="Q5BA93"/>
<dbReference type="STRING" id="227321.Q5BA93"/>
<dbReference type="CAZy" id="PL9">
    <property type="family name" value="Polysaccharide Lyase Family 9"/>
</dbReference>
<dbReference type="EnsemblFungi" id="CBF87052">
    <property type="protein sequence ID" value="CBF87052"/>
    <property type="gene ID" value="ANIA_02537"/>
</dbReference>
<dbReference type="GeneID" id="2874771"/>
<dbReference type="KEGG" id="ani:ANIA_02537"/>
<dbReference type="VEuPathDB" id="FungiDB:AN2537"/>
<dbReference type="eggNOG" id="ENOG502QSUT">
    <property type="taxonomic scope" value="Eukaryota"/>
</dbReference>
<dbReference type="HOGENOM" id="CLU_030634_1_0_1"/>
<dbReference type="InParanoid" id="Q5BA93"/>
<dbReference type="OMA" id="DSHHNYD"/>
<dbReference type="OrthoDB" id="5561043at2759"/>
<dbReference type="Proteomes" id="UP000000560">
    <property type="component" value="Chromosome VII"/>
</dbReference>
<dbReference type="GO" id="GO:0005576">
    <property type="term" value="C:extracellular region"/>
    <property type="evidence" value="ECO:0000314"/>
    <property type="project" value="UniProtKB"/>
</dbReference>
<dbReference type="GO" id="GO:0016837">
    <property type="term" value="F:carbon-oxygen lyase activity, acting on polysaccharides"/>
    <property type="evidence" value="ECO:0000318"/>
    <property type="project" value="GO_Central"/>
</dbReference>
<dbReference type="GO" id="GO:0046872">
    <property type="term" value="F:metal ion binding"/>
    <property type="evidence" value="ECO:0007669"/>
    <property type="project" value="UniProtKB-KW"/>
</dbReference>
<dbReference type="GO" id="GO:0030570">
    <property type="term" value="F:pectate lyase activity"/>
    <property type="evidence" value="ECO:0000314"/>
    <property type="project" value="UniProtKB"/>
</dbReference>
<dbReference type="GO" id="GO:0052009">
    <property type="term" value="P:symbiont-mediated disruption of host cell wall"/>
    <property type="evidence" value="ECO:0000314"/>
    <property type="project" value="UniProtKB"/>
</dbReference>
<dbReference type="Gene3D" id="2.160.20.10">
    <property type="entry name" value="Single-stranded right-handed beta-helix, Pectin lyase-like"/>
    <property type="match status" value="1"/>
</dbReference>
<dbReference type="InterPro" id="IPR012334">
    <property type="entry name" value="Pectin_lyas_fold"/>
</dbReference>
<dbReference type="InterPro" id="IPR011050">
    <property type="entry name" value="Pectin_lyase_fold/virulence"/>
</dbReference>
<dbReference type="InterPro" id="IPR053868">
    <property type="entry name" value="Pel9A-like_beta_helix"/>
</dbReference>
<dbReference type="InterPro" id="IPR052052">
    <property type="entry name" value="Polysaccharide_Lyase_9"/>
</dbReference>
<dbReference type="PANTHER" id="PTHR40088">
    <property type="entry name" value="PECTATE LYASE (EUROFUNG)"/>
    <property type="match status" value="1"/>
</dbReference>
<dbReference type="PANTHER" id="PTHR40088:SF1">
    <property type="entry name" value="PECTATE LYASE PEL9"/>
    <property type="match status" value="1"/>
</dbReference>
<dbReference type="Pfam" id="PF22842">
    <property type="entry name" value="Pel9A-like_beta_helix"/>
    <property type="match status" value="1"/>
</dbReference>
<dbReference type="SUPFAM" id="SSF51126">
    <property type="entry name" value="Pectin lyase-like"/>
    <property type="match status" value="1"/>
</dbReference>